<proteinExistence type="inferred from homology"/>
<evidence type="ECO:0000255" key="1">
    <source>
        <dbReference type="HAMAP-Rule" id="MF_00097"/>
    </source>
</evidence>
<feature type="chain" id="PRO_1000057646" description="Thiamine-phosphate synthase">
    <location>
        <begin position="1"/>
        <end position="209"/>
    </location>
</feature>
<feature type="binding site" evidence="1">
    <location>
        <begin position="38"/>
        <end position="42"/>
    </location>
    <ligand>
        <name>4-amino-2-methyl-5-(diphosphooxymethyl)pyrimidine</name>
        <dbReference type="ChEBI" id="CHEBI:57841"/>
    </ligand>
</feature>
<feature type="binding site" evidence="1">
    <location>
        <position position="70"/>
    </location>
    <ligand>
        <name>4-amino-2-methyl-5-(diphosphooxymethyl)pyrimidine</name>
        <dbReference type="ChEBI" id="CHEBI:57841"/>
    </ligand>
</feature>
<feature type="binding site" evidence="1">
    <location>
        <position position="71"/>
    </location>
    <ligand>
        <name>Mg(2+)</name>
        <dbReference type="ChEBI" id="CHEBI:18420"/>
    </ligand>
</feature>
<feature type="binding site" evidence="1">
    <location>
        <position position="90"/>
    </location>
    <ligand>
        <name>Mg(2+)</name>
        <dbReference type="ChEBI" id="CHEBI:18420"/>
    </ligand>
</feature>
<feature type="binding site" evidence="1">
    <location>
        <position position="109"/>
    </location>
    <ligand>
        <name>4-amino-2-methyl-5-(diphosphooxymethyl)pyrimidine</name>
        <dbReference type="ChEBI" id="CHEBI:57841"/>
    </ligand>
</feature>
<feature type="binding site" evidence="1">
    <location>
        <begin position="135"/>
        <end position="137"/>
    </location>
    <ligand>
        <name>2-[(2R,5Z)-2-carboxy-4-methylthiazol-5(2H)-ylidene]ethyl phosphate</name>
        <dbReference type="ChEBI" id="CHEBI:62899"/>
    </ligand>
</feature>
<feature type="binding site" evidence="1">
    <location>
        <position position="138"/>
    </location>
    <ligand>
        <name>4-amino-2-methyl-5-(diphosphooxymethyl)pyrimidine</name>
        <dbReference type="ChEBI" id="CHEBI:57841"/>
    </ligand>
</feature>
<feature type="binding site" evidence="1">
    <location>
        <position position="166"/>
    </location>
    <ligand>
        <name>2-[(2R,5Z)-2-carboxy-4-methylthiazol-5(2H)-ylidene]ethyl phosphate</name>
        <dbReference type="ChEBI" id="CHEBI:62899"/>
    </ligand>
</feature>
<feature type="binding site" evidence="1">
    <location>
        <begin position="186"/>
        <end position="187"/>
    </location>
    <ligand>
        <name>2-[(2R,5Z)-2-carboxy-4-methylthiazol-5(2H)-ylidene]ethyl phosphate</name>
        <dbReference type="ChEBI" id="CHEBI:62899"/>
    </ligand>
</feature>
<reference key="1">
    <citation type="journal article" date="2010" name="Environ. Microbiol.">
        <title>The genome of Syntrophomonas wolfei: new insights into syntrophic metabolism and biohydrogen production.</title>
        <authorList>
            <person name="Sieber J.R."/>
            <person name="Sims D.R."/>
            <person name="Han C."/>
            <person name="Kim E."/>
            <person name="Lykidis A."/>
            <person name="Lapidus A.L."/>
            <person name="McDonnald E."/>
            <person name="Rohlin L."/>
            <person name="Culley D.E."/>
            <person name="Gunsalus R."/>
            <person name="McInerney M.J."/>
        </authorList>
    </citation>
    <scope>NUCLEOTIDE SEQUENCE [LARGE SCALE GENOMIC DNA]</scope>
    <source>
        <strain>DSM 2245B / Goettingen</strain>
    </source>
</reference>
<name>THIE_SYNWW</name>
<organism>
    <name type="scientific">Syntrophomonas wolfei subsp. wolfei (strain DSM 2245B / Goettingen)</name>
    <dbReference type="NCBI Taxonomy" id="335541"/>
    <lineage>
        <taxon>Bacteria</taxon>
        <taxon>Bacillati</taxon>
        <taxon>Bacillota</taxon>
        <taxon>Clostridia</taxon>
        <taxon>Eubacteriales</taxon>
        <taxon>Syntrophomonadaceae</taxon>
        <taxon>Syntrophomonas</taxon>
    </lineage>
</organism>
<keyword id="KW-0460">Magnesium</keyword>
<keyword id="KW-0479">Metal-binding</keyword>
<keyword id="KW-1185">Reference proteome</keyword>
<keyword id="KW-0784">Thiamine biosynthesis</keyword>
<keyword id="KW-0808">Transferase</keyword>
<sequence length="209" mass="22766">MVNSDYSLYLVTDRSLLQGRSLLEEVRKAVKGGVSMVQLREKEAGSREFYELAQTLQTELRELGVPLLINDRLDIALAVDADGLHLGQDDLPLPVARSLLGKEKIIGLSINKREEAREGEKMGADYLGVSPVFSTPTKADAPPATGLEFLASLRQEIKIPLVAIGGINKENLKMIKETGADGAAVISALMGASDIEGEARKLRQIWERN</sequence>
<dbReference type="EC" id="2.5.1.3" evidence="1"/>
<dbReference type="EMBL" id="CP000448">
    <property type="protein sequence ID" value="ABI67968.1"/>
    <property type="molecule type" value="Genomic_DNA"/>
</dbReference>
<dbReference type="RefSeq" id="WP_011640073.1">
    <property type="nucleotide sequence ID" value="NC_008346.1"/>
</dbReference>
<dbReference type="SMR" id="Q0AZ86"/>
<dbReference type="STRING" id="335541.Swol_0641"/>
<dbReference type="KEGG" id="swo:Swol_0641"/>
<dbReference type="eggNOG" id="COG0352">
    <property type="taxonomic scope" value="Bacteria"/>
</dbReference>
<dbReference type="HOGENOM" id="CLU_018272_3_2_9"/>
<dbReference type="OrthoDB" id="9812206at2"/>
<dbReference type="UniPathway" id="UPA00060">
    <property type="reaction ID" value="UER00141"/>
</dbReference>
<dbReference type="Proteomes" id="UP000001968">
    <property type="component" value="Chromosome"/>
</dbReference>
<dbReference type="GO" id="GO:0005737">
    <property type="term" value="C:cytoplasm"/>
    <property type="evidence" value="ECO:0007669"/>
    <property type="project" value="TreeGrafter"/>
</dbReference>
<dbReference type="GO" id="GO:0000287">
    <property type="term" value="F:magnesium ion binding"/>
    <property type="evidence" value="ECO:0007669"/>
    <property type="project" value="UniProtKB-UniRule"/>
</dbReference>
<dbReference type="GO" id="GO:0004789">
    <property type="term" value="F:thiamine-phosphate diphosphorylase activity"/>
    <property type="evidence" value="ECO:0007669"/>
    <property type="project" value="UniProtKB-UniRule"/>
</dbReference>
<dbReference type="GO" id="GO:0009228">
    <property type="term" value="P:thiamine biosynthetic process"/>
    <property type="evidence" value="ECO:0007669"/>
    <property type="project" value="UniProtKB-KW"/>
</dbReference>
<dbReference type="GO" id="GO:0009229">
    <property type="term" value="P:thiamine diphosphate biosynthetic process"/>
    <property type="evidence" value="ECO:0007669"/>
    <property type="project" value="UniProtKB-UniRule"/>
</dbReference>
<dbReference type="CDD" id="cd00564">
    <property type="entry name" value="TMP_TenI"/>
    <property type="match status" value="1"/>
</dbReference>
<dbReference type="FunFam" id="3.20.20.70:FF:000096">
    <property type="entry name" value="Thiamine-phosphate synthase"/>
    <property type="match status" value="1"/>
</dbReference>
<dbReference type="Gene3D" id="3.20.20.70">
    <property type="entry name" value="Aldolase class I"/>
    <property type="match status" value="1"/>
</dbReference>
<dbReference type="HAMAP" id="MF_00097">
    <property type="entry name" value="TMP_synthase"/>
    <property type="match status" value="1"/>
</dbReference>
<dbReference type="InterPro" id="IPR013785">
    <property type="entry name" value="Aldolase_TIM"/>
</dbReference>
<dbReference type="InterPro" id="IPR036206">
    <property type="entry name" value="ThiamineP_synth_sf"/>
</dbReference>
<dbReference type="InterPro" id="IPR022998">
    <property type="entry name" value="ThiamineP_synth_TenI"/>
</dbReference>
<dbReference type="InterPro" id="IPR034291">
    <property type="entry name" value="TMP_synthase"/>
</dbReference>
<dbReference type="NCBIfam" id="TIGR00693">
    <property type="entry name" value="thiE"/>
    <property type="match status" value="1"/>
</dbReference>
<dbReference type="PANTHER" id="PTHR20857">
    <property type="entry name" value="THIAMINE-PHOSPHATE PYROPHOSPHORYLASE"/>
    <property type="match status" value="1"/>
</dbReference>
<dbReference type="PANTHER" id="PTHR20857:SF15">
    <property type="entry name" value="THIAMINE-PHOSPHATE SYNTHASE"/>
    <property type="match status" value="1"/>
</dbReference>
<dbReference type="Pfam" id="PF02581">
    <property type="entry name" value="TMP-TENI"/>
    <property type="match status" value="1"/>
</dbReference>
<dbReference type="SUPFAM" id="SSF51391">
    <property type="entry name" value="Thiamin phosphate synthase"/>
    <property type="match status" value="1"/>
</dbReference>
<accession>Q0AZ86</accession>
<comment type="function">
    <text evidence="1">Condenses 4-methyl-5-(beta-hydroxyethyl)thiazole monophosphate (THZ-P) and 2-methyl-4-amino-5-hydroxymethyl pyrimidine pyrophosphate (HMP-PP) to form thiamine monophosphate (TMP).</text>
</comment>
<comment type="catalytic activity">
    <reaction evidence="1">
        <text>2-[(2R,5Z)-2-carboxy-4-methylthiazol-5(2H)-ylidene]ethyl phosphate + 4-amino-2-methyl-5-(diphosphooxymethyl)pyrimidine + 2 H(+) = thiamine phosphate + CO2 + diphosphate</text>
        <dbReference type="Rhea" id="RHEA:47844"/>
        <dbReference type="ChEBI" id="CHEBI:15378"/>
        <dbReference type="ChEBI" id="CHEBI:16526"/>
        <dbReference type="ChEBI" id="CHEBI:33019"/>
        <dbReference type="ChEBI" id="CHEBI:37575"/>
        <dbReference type="ChEBI" id="CHEBI:57841"/>
        <dbReference type="ChEBI" id="CHEBI:62899"/>
        <dbReference type="EC" id="2.5.1.3"/>
    </reaction>
</comment>
<comment type="catalytic activity">
    <reaction evidence="1">
        <text>2-(2-carboxy-4-methylthiazol-5-yl)ethyl phosphate + 4-amino-2-methyl-5-(diphosphooxymethyl)pyrimidine + 2 H(+) = thiamine phosphate + CO2 + diphosphate</text>
        <dbReference type="Rhea" id="RHEA:47848"/>
        <dbReference type="ChEBI" id="CHEBI:15378"/>
        <dbReference type="ChEBI" id="CHEBI:16526"/>
        <dbReference type="ChEBI" id="CHEBI:33019"/>
        <dbReference type="ChEBI" id="CHEBI:37575"/>
        <dbReference type="ChEBI" id="CHEBI:57841"/>
        <dbReference type="ChEBI" id="CHEBI:62890"/>
        <dbReference type="EC" id="2.5.1.3"/>
    </reaction>
</comment>
<comment type="catalytic activity">
    <reaction evidence="1">
        <text>4-methyl-5-(2-phosphooxyethyl)-thiazole + 4-amino-2-methyl-5-(diphosphooxymethyl)pyrimidine + H(+) = thiamine phosphate + diphosphate</text>
        <dbReference type="Rhea" id="RHEA:22328"/>
        <dbReference type="ChEBI" id="CHEBI:15378"/>
        <dbReference type="ChEBI" id="CHEBI:33019"/>
        <dbReference type="ChEBI" id="CHEBI:37575"/>
        <dbReference type="ChEBI" id="CHEBI:57841"/>
        <dbReference type="ChEBI" id="CHEBI:58296"/>
        <dbReference type="EC" id="2.5.1.3"/>
    </reaction>
</comment>
<comment type="cofactor">
    <cofactor evidence="1">
        <name>Mg(2+)</name>
        <dbReference type="ChEBI" id="CHEBI:18420"/>
    </cofactor>
    <text evidence="1">Binds 1 Mg(2+) ion per subunit.</text>
</comment>
<comment type="pathway">
    <text evidence="1">Cofactor biosynthesis; thiamine diphosphate biosynthesis; thiamine phosphate from 4-amino-2-methyl-5-diphosphomethylpyrimidine and 4-methyl-5-(2-phosphoethyl)-thiazole: step 1/1.</text>
</comment>
<comment type="similarity">
    <text evidence="1">Belongs to the thiamine-phosphate synthase family.</text>
</comment>
<protein>
    <recommendedName>
        <fullName evidence="1">Thiamine-phosphate synthase</fullName>
        <shortName evidence="1">TP synthase</shortName>
        <shortName evidence="1">TPS</shortName>
        <ecNumber evidence="1">2.5.1.3</ecNumber>
    </recommendedName>
    <alternativeName>
        <fullName evidence="1">Thiamine-phosphate pyrophosphorylase</fullName>
        <shortName evidence="1">TMP pyrophosphorylase</shortName>
        <shortName evidence="1">TMP-PPase</shortName>
    </alternativeName>
</protein>
<gene>
    <name evidence="1" type="primary">thiE</name>
    <name type="ordered locus">Swol_0641</name>
</gene>